<organism>
    <name type="scientific">Staphylococcus epidermidis (strain ATCC 12228 / FDA PCI 1200)</name>
    <dbReference type="NCBI Taxonomy" id="176280"/>
    <lineage>
        <taxon>Bacteria</taxon>
        <taxon>Bacillati</taxon>
        <taxon>Bacillota</taxon>
        <taxon>Bacilli</taxon>
        <taxon>Bacillales</taxon>
        <taxon>Staphylococcaceae</taxon>
        <taxon>Staphylococcus</taxon>
    </lineage>
</organism>
<keyword id="KW-0687">Ribonucleoprotein</keyword>
<keyword id="KW-0689">Ribosomal protein</keyword>
<keyword id="KW-0694">RNA-binding</keyword>
<keyword id="KW-0699">rRNA-binding</keyword>
<feature type="chain" id="PRO_0000181598" description="Large ribosomal subunit protein bL25">
    <location>
        <begin position="1"/>
        <end position="219"/>
    </location>
</feature>
<feature type="region of interest" description="Disordered" evidence="2">
    <location>
        <begin position="176"/>
        <end position="219"/>
    </location>
</feature>
<feature type="compositionally biased region" description="Acidic residues" evidence="2">
    <location>
        <begin position="184"/>
        <end position="219"/>
    </location>
</feature>
<proteinExistence type="inferred from homology"/>
<name>RL25_STAES</name>
<reference key="1">
    <citation type="journal article" date="2003" name="Mol. Microbiol.">
        <title>Genome-based analysis of virulence genes in a non-biofilm-forming Staphylococcus epidermidis strain (ATCC 12228).</title>
        <authorList>
            <person name="Zhang Y.-Q."/>
            <person name="Ren S.-X."/>
            <person name="Li H.-L."/>
            <person name="Wang Y.-X."/>
            <person name="Fu G."/>
            <person name="Yang J."/>
            <person name="Qin Z.-Q."/>
            <person name="Miao Y.-G."/>
            <person name="Wang W.-Y."/>
            <person name="Chen R.-S."/>
            <person name="Shen Y."/>
            <person name="Chen Z."/>
            <person name="Yuan Z.-H."/>
            <person name="Zhao G.-P."/>
            <person name="Qu D."/>
            <person name="Danchin A."/>
            <person name="Wen Y.-M."/>
        </authorList>
    </citation>
    <scope>NUCLEOTIDE SEQUENCE [LARGE SCALE GENOMIC DNA]</scope>
    <source>
        <strain>ATCC 12228 / FDA PCI 1200</strain>
    </source>
</reference>
<sequence>MASLKSIIRQGKQTRSDLKQLRNSGKVPAVVYGYGTKNTSVKVDEVEFIKVIREVGRNGVIDLGVGSKTIKVMVSDYQFDPLKNQITHIDFLAINMSEERTVEVQVQLVGEAVGAKEGGVVEQPLFNLEVTATPENIPETIEVDISELQVNDSLAVSDIKISGDFTIENNPEDSIVTVVPPTDEPSEEEVEAMEGESATEEPEVVDEDKEDDEEENKED</sequence>
<comment type="function">
    <text evidence="1">This is one of the proteins that binds to the 5S RNA in the ribosome where it forms part of the central protuberance.</text>
</comment>
<comment type="subunit">
    <text evidence="1">Part of the 50S ribosomal subunit; part of the 5S rRNA/L5/L18/L25 subcomplex. Contacts the 5S rRNA. Binds to the 5S rRNA independently of L5 and L18.</text>
</comment>
<comment type="similarity">
    <text evidence="1">Belongs to the bacterial ribosomal protein bL25 family. CTC subfamily.</text>
</comment>
<accession>Q8CQU8</accession>
<gene>
    <name evidence="1" type="primary">rplY</name>
    <name evidence="1" type="synonym">ctc</name>
    <name type="ordered locus">SE_2282</name>
</gene>
<protein>
    <recommendedName>
        <fullName evidence="1">Large ribosomal subunit protein bL25</fullName>
    </recommendedName>
    <alternativeName>
        <fullName evidence="3">50S ribosomal protein L25</fullName>
    </alternativeName>
    <alternativeName>
        <fullName evidence="1">General stress protein CTC</fullName>
    </alternativeName>
</protein>
<dbReference type="EMBL" id="AE015929">
    <property type="protein sequence ID" value="AAO05924.1"/>
    <property type="molecule type" value="Genomic_DNA"/>
</dbReference>
<dbReference type="RefSeq" id="NP_765837.1">
    <property type="nucleotide sequence ID" value="NC_004461.1"/>
</dbReference>
<dbReference type="RefSeq" id="WP_002485035.1">
    <property type="nucleotide sequence ID" value="NC_004461.1"/>
</dbReference>
<dbReference type="SMR" id="Q8CQU8"/>
<dbReference type="KEGG" id="sep:SE_2282"/>
<dbReference type="PATRIC" id="fig|176280.10.peg.2225"/>
<dbReference type="eggNOG" id="COG1825">
    <property type="taxonomic scope" value="Bacteria"/>
</dbReference>
<dbReference type="HOGENOM" id="CLU_075939_2_0_9"/>
<dbReference type="OrthoDB" id="9790002at2"/>
<dbReference type="Proteomes" id="UP000001411">
    <property type="component" value="Chromosome"/>
</dbReference>
<dbReference type="GO" id="GO:0022625">
    <property type="term" value="C:cytosolic large ribosomal subunit"/>
    <property type="evidence" value="ECO:0007669"/>
    <property type="project" value="TreeGrafter"/>
</dbReference>
<dbReference type="GO" id="GO:0008097">
    <property type="term" value="F:5S rRNA binding"/>
    <property type="evidence" value="ECO:0007669"/>
    <property type="project" value="InterPro"/>
</dbReference>
<dbReference type="GO" id="GO:0003735">
    <property type="term" value="F:structural constituent of ribosome"/>
    <property type="evidence" value="ECO:0007669"/>
    <property type="project" value="InterPro"/>
</dbReference>
<dbReference type="GO" id="GO:0006412">
    <property type="term" value="P:translation"/>
    <property type="evidence" value="ECO:0007669"/>
    <property type="project" value="UniProtKB-UniRule"/>
</dbReference>
<dbReference type="CDD" id="cd00495">
    <property type="entry name" value="Ribosomal_L25_TL5_CTC"/>
    <property type="match status" value="1"/>
</dbReference>
<dbReference type="FunFam" id="2.40.240.10:FF:000013">
    <property type="entry name" value="50S ribosomal protein L25"/>
    <property type="match status" value="1"/>
</dbReference>
<dbReference type="Gene3D" id="2.170.120.20">
    <property type="entry name" value="Ribosomal protein L25, beta domain"/>
    <property type="match status" value="1"/>
</dbReference>
<dbReference type="Gene3D" id="2.40.240.10">
    <property type="entry name" value="Ribosomal Protein L25, Chain P"/>
    <property type="match status" value="1"/>
</dbReference>
<dbReference type="HAMAP" id="MF_01334">
    <property type="entry name" value="Ribosomal_bL25_CTC"/>
    <property type="match status" value="1"/>
</dbReference>
<dbReference type="InterPro" id="IPR020056">
    <property type="entry name" value="Rbsml_bL25/Gln-tRNA_synth_N"/>
</dbReference>
<dbReference type="InterPro" id="IPR011035">
    <property type="entry name" value="Ribosomal_bL25/Gln-tRNA_synth"/>
</dbReference>
<dbReference type="InterPro" id="IPR020057">
    <property type="entry name" value="Ribosomal_bL25_b-dom"/>
</dbReference>
<dbReference type="InterPro" id="IPR037121">
    <property type="entry name" value="Ribosomal_bL25_C"/>
</dbReference>
<dbReference type="InterPro" id="IPR001021">
    <property type="entry name" value="Ribosomal_bL25_long"/>
</dbReference>
<dbReference type="InterPro" id="IPR029751">
    <property type="entry name" value="Ribosomal_L25_dom"/>
</dbReference>
<dbReference type="InterPro" id="IPR020930">
    <property type="entry name" value="Ribosomal_uL5_bac-type"/>
</dbReference>
<dbReference type="NCBIfam" id="TIGR00731">
    <property type="entry name" value="bL25_bact_ctc"/>
    <property type="match status" value="1"/>
</dbReference>
<dbReference type="NCBIfam" id="NF004133">
    <property type="entry name" value="PRK05618.2-4"/>
    <property type="match status" value="1"/>
</dbReference>
<dbReference type="NCBIfam" id="NF004134">
    <property type="entry name" value="PRK05618.2-5"/>
    <property type="match status" value="1"/>
</dbReference>
<dbReference type="PANTHER" id="PTHR33284">
    <property type="entry name" value="RIBOSOMAL PROTEIN L25/GLN-TRNA SYNTHETASE, ANTI-CODON-BINDING DOMAIN-CONTAINING PROTEIN"/>
    <property type="match status" value="1"/>
</dbReference>
<dbReference type="PANTHER" id="PTHR33284:SF1">
    <property type="entry name" value="RIBOSOMAL PROTEIN L25_GLN-TRNA SYNTHETASE, ANTI-CODON-BINDING DOMAIN-CONTAINING PROTEIN"/>
    <property type="match status" value="1"/>
</dbReference>
<dbReference type="Pfam" id="PF01386">
    <property type="entry name" value="Ribosomal_L25p"/>
    <property type="match status" value="1"/>
</dbReference>
<dbReference type="Pfam" id="PF14693">
    <property type="entry name" value="Ribosomal_TL5_C"/>
    <property type="match status" value="1"/>
</dbReference>
<dbReference type="SUPFAM" id="SSF50715">
    <property type="entry name" value="Ribosomal protein L25-like"/>
    <property type="match status" value="1"/>
</dbReference>
<evidence type="ECO:0000255" key="1">
    <source>
        <dbReference type="HAMAP-Rule" id="MF_01334"/>
    </source>
</evidence>
<evidence type="ECO:0000256" key="2">
    <source>
        <dbReference type="SAM" id="MobiDB-lite"/>
    </source>
</evidence>
<evidence type="ECO:0000305" key="3"/>